<comment type="function">
    <text evidence="1">Catalyzes the interconversion between ADP-D-glycero-beta-D-manno-heptose and ADP-L-glycero-beta-D-manno-heptose via an epimerization at carbon 6 of the heptose.</text>
</comment>
<comment type="catalytic activity">
    <reaction evidence="1">
        <text>ADP-D-glycero-beta-D-manno-heptose = ADP-L-glycero-beta-D-manno-heptose</text>
        <dbReference type="Rhea" id="RHEA:17577"/>
        <dbReference type="ChEBI" id="CHEBI:59967"/>
        <dbReference type="ChEBI" id="CHEBI:61506"/>
        <dbReference type="EC" id="5.1.3.20"/>
    </reaction>
</comment>
<comment type="cofactor">
    <cofactor evidence="1">
        <name>NADP(+)</name>
        <dbReference type="ChEBI" id="CHEBI:58349"/>
    </cofactor>
    <text evidence="1">Binds 1 NADP(+) per subunit.</text>
</comment>
<comment type="pathway">
    <text evidence="1">Nucleotide-sugar biosynthesis; ADP-L-glycero-beta-D-manno-heptose biosynthesis; ADP-L-glycero-beta-D-manno-heptose from D-glycero-beta-D-manno-heptose 7-phosphate: step 4/4.</text>
</comment>
<comment type="subunit">
    <text evidence="1">Homopentamer.</text>
</comment>
<comment type="domain">
    <text evidence="1">Contains a large N-terminal NADP-binding domain, and a smaller C-terminal substrate-binding domain.</text>
</comment>
<comment type="similarity">
    <text evidence="1">Belongs to the NAD(P)-dependent epimerase/dehydratase family. HldD subfamily.</text>
</comment>
<proteinExistence type="inferred from homology"/>
<reference key="1">
    <citation type="journal article" date="2005" name="Proc. Natl. Acad. Sci. U.S.A.">
        <title>Complete genome sequence of Vibrio fischeri: a symbiotic bacterium with pathogenic congeners.</title>
        <authorList>
            <person name="Ruby E.G."/>
            <person name="Urbanowski M."/>
            <person name="Campbell J."/>
            <person name="Dunn A."/>
            <person name="Faini M."/>
            <person name="Gunsalus R."/>
            <person name="Lostroh P."/>
            <person name="Lupp C."/>
            <person name="McCann J."/>
            <person name="Millikan D."/>
            <person name="Schaefer A."/>
            <person name="Stabb E."/>
            <person name="Stevens A."/>
            <person name="Visick K."/>
            <person name="Whistler C."/>
            <person name="Greenberg E.P."/>
        </authorList>
    </citation>
    <scope>NUCLEOTIDE SEQUENCE [LARGE SCALE GENOMIC DNA]</scope>
    <source>
        <strain>ATCC 700601 / ES114</strain>
    </source>
</reference>
<name>HLDD_ALIF1</name>
<feature type="chain" id="PRO_1000185793" description="ADP-L-glycero-D-manno-heptose-6-epimerase">
    <location>
        <begin position="1"/>
        <end position="313"/>
    </location>
</feature>
<feature type="active site" description="Proton acceptor" evidence="1">
    <location>
        <position position="139"/>
    </location>
</feature>
<feature type="active site" description="Proton acceptor" evidence="1">
    <location>
        <position position="183"/>
    </location>
</feature>
<feature type="binding site" evidence="1">
    <location>
        <begin position="10"/>
        <end position="11"/>
    </location>
    <ligand>
        <name>NADP(+)</name>
        <dbReference type="ChEBI" id="CHEBI:58349"/>
    </ligand>
</feature>
<feature type="binding site" evidence="1">
    <location>
        <begin position="31"/>
        <end position="32"/>
    </location>
    <ligand>
        <name>NADP(+)</name>
        <dbReference type="ChEBI" id="CHEBI:58349"/>
    </ligand>
</feature>
<feature type="binding site" evidence="1">
    <location>
        <position position="38"/>
    </location>
    <ligand>
        <name>NADP(+)</name>
        <dbReference type="ChEBI" id="CHEBI:58349"/>
    </ligand>
</feature>
<feature type="binding site" evidence="1">
    <location>
        <position position="53"/>
    </location>
    <ligand>
        <name>NADP(+)</name>
        <dbReference type="ChEBI" id="CHEBI:58349"/>
    </ligand>
</feature>
<feature type="binding site" evidence="1">
    <location>
        <begin position="75"/>
        <end position="79"/>
    </location>
    <ligand>
        <name>NADP(+)</name>
        <dbReference type="ChEBI" id="CHEBI:58349"/>
    </ligand>
</feature>
<feature type="binding site" evidence="1">
    <location>
        <position position="92"/>
    </location>
    <ligand>
        <name>NADP(+)</name>
        <dbReference type="ChEBI" id="CHEBI:58349"/>
    </ligand>
</feature>
<feature type="binding site" evidence="1">
    <location>
        <position position="143"/>
    </location>
    <ligand>
        <name>NADP(+)</name>
        <dbReference type="ChEBI" id="CHEBI:58349"/>
    </ligand>
</feature>
<feature type="binding site" evidence="1">
    <location>
        <position position="174"/>
    </location>
    <ligand>
        <name>substrate</name>
    </ligand>
</feature>
<feature type="binding site" evidence="1">
    <location>
        <position position="175"/>
    </location>
    <ligand>
        <name>NADP(+)</name>
        <dbReference type="ChEBI" id="CHEBI:58349"/>
    </ligand>
</feature>
<feature type="binding site" evidence="1">
    <location>
        <position position="183"/>
    </location>
    <ligand>
        <name>NADP(+)</name>
        <dbReference type="ChEBI" id="CHEBI:58349"/>
    </ligand>
</feature>
<feature type="binding site" evidence="1">
    <location>
        <position position="185"/>
    </location>
    <ligand>
        <name>substrate</name>
    </ligand>
</feature>
<feature type="binding site" evidence="1">
    <location>
        <position position="192"/>
    </location>
    <ligand>
        <name>substrate</name>
    </ligand>
</feature>
<feature type="binding site" evidence="1">
    <location>
        <begin position="206"/>
        <end position="209"/>
    </location>
    <ligand>
        <name>substrate</name>
    </ligand>
</feature>
<feature type="binding site" evidence="1">
    <location>
        <position position="214"/>
    </location>
    <ligand>
        <name>substrate</name>
    </ligand>
</feature>
<feature type="binding site" evidence="1">
    <location>
        <position position="277"/>
    </location>
    <ligand>
        <name>substrate</name>
    </ligand>
</feature>
<keyword id="KW-0119">Carbohydrate metabolism</keyword>
<keyword id="KW-0413">Isomerase</keyword>
<keyword id="KW-0521">NADP</keyword>
<keyword id="KW-1185">Reference proteome</keyword>
<dbReference type="EC" id="5.1.3.20" evidence="1"/>
<dbReference type="EMBL" id="CP000020">
    <property type="protein sequence ID" value="AAW84647.1"/>
    <property type="molecule type" value="Genomic_DNA"/>
</dbReference>
<dbReference type="RefSeq" id="WP_011261012.1">
    <property type="nucleotide sequence ID" value="NC_006840.2"/>
</dbReference>
<dbReference type="RefSeq" id="YP_203535.1">
    <property type="nucleotide sequence ID" value="NC_006840.2"/>
</dbReference>
<dbReference type="SMR" id="Q5E8J9"/>
<dbReference type="STRING" id="312309.VF_0152"/>
<dbReference type="EnsemblBacteria" id="AAW84647">
    <property type="protein sequence ID" value="AAW84647"/>
    <property type="gene ID" value="VF_0152"/>
</dbReference>
<dbReference type="GeneID" id="54162778"/>
<dbReference type="KEGG" id="vfi:VF_0152"/>
<dbReference type="PATRIC" id="fig|312309.11.peg.151"/>
<dbReference type="eggNOG" id="COG0451">
    <property type="taxonomic scope" value="Bacteria"/>
</dbReference>
<dbReference type="HOGENOM" id="CLU_007383_1_3_6"/>
<dbReference type="OrthoDB" id="9803010at2"/>
<dbReference type="UniPathway" id="UPA00356">
    <property type="reaction ID" value="UER00440"/>
</dbReference>
<dbReference type="Proteomes" id="UP000000537">
    <property type="component" value="Chromosome I"/>
</dbReference>
<dbReference type="GO" id="GO:0008712">
    <property type="term" value="F:ADP-glyceromanno-heptose 6-epimerase activity"/>
    <property type="evidence" value="ECO:0007669"/>
    <property type="project" value="UniProtKB-UniRule"/>
</dbReference>
<dbReference type="GO" id="GO:0050661">
    <property type="term" value="F:NADP binding"/>
    <property type="evidence" value="ECO:0007669"/>
    <property type="project" value="InterPro"/>
</dbReference>
<dbReference type="GO" id="GO:0097171">
    <property type="term" value="P:ADP-L-glycero-beta-D-manno-heptose biosynthetic process"/>
    <property type="evidence" value="ECO:0007669"/>
    <property type="project" value="UniProtKB-UniPathway"/>
</dbReference>
<dbReference type="GO" id="GO:0005975">
    <property type="term" value="P:carbohydrate metabolic process"/>
    <property type="evidence" value="ECO:0007669"/>
    <property type="project" value="UniProtKB-UniRule"/>
</dbReference>
<dbReference type="CDD" id="cd05248">
    <property type="entry name" value="ADP_GME_SDR_e"/>
    <property type="match status" value="1"/>
</dbReference>
<dbReference type="Gene3D" id="3.40.50.720">
    <property type="entry name" value="NAD(P)-binding Rossmann-like Domain"/>
    <property type="match status" value="1"/>
</dbReference>
<dbReference type="Gene3D" id="3.90.25.10">
    <property type="entry name" value="UDP-galactose 4-epimerase, domain 1"/>
    <property type="match status" value="1"/>
</dbReference>
<dbReference type="HAMAP" id="MF_01601">
    <property type="entry name" value="Heptose_epimerase"/>
    <property type="match status" value="1"/>
</dbReference>
<dbReference type="InterPro" id="IPR001509">
    <property type="entry name" value="Epimerase_deHydtase"/>
</dbReference>
<dbReference type="InterPro" id="IPR011912">
    <property type="entry name" value="Heptose_epim"/>
</dbReference>
<dbReference type="InterPro" id="IPR036291">
    <property type="entry name" value="NAD(P)-bd_dom_sf"/>
</dbReference>
<dbReference type="NCBIfam" id="TIGR02197">
    <property type="entry name" value="heptose_epim"/>
    <property type="match status" value="1"/>
</dbReference>
<dbReference type="NCBIfam" id="NF008360">
    <property type="entry name" value="PRK11150.1"/>
    <property type="match status" value="1"/>
</dbReference>
<dbReference type="PANTHER" id="PTHR43103:SF3">
    <property type="entry name" value="ADP-L-GLYCERO-D-MANNO-HEPTOSE-6-EPIMERASE"/>
    <property type="match status" value="1"/>
</dbReference>
<dbReference type="PANTHER" id="PTHR43103">
    <property type="entry name" value="NUCLEOSIDE-DIPHOSPHATE-SUGAR EPIMERASE"/>
    <property type="match status" value="1"/>
</dbReference>
<dbReference type="Pfam" id="PF01370">
    <property type="entry name" value="Epimerase"/>
    <property type="match status" value="1"/>
</dbReference>
<dbReference type="SUPFAM" id="SSF51735">
    <property type="entry name" value="NAD(P)-binding Rossmann-fold domains"/>
    <property type="match status" value="1"/>
</dbReference>
<accession>Q5E8J9</accession>
<protein>
    <recommendedName>
        <fullName evidence="1">ADP-L-glycero-D-manno-heptose-6-epimerase</fullName>
        <ecNumber evidence="1">5.1.3.20</ecNumber>
    </recommendedName>
    <alternativeName>
        <fullName evidence="1">ADP-L-glycero-beta-D-manno-heptose-6-epimerase</fullName>
        <shortName evidence="1">ADP-glyceromanno-heptose 6-epimerase</shortName>
        <shortName evidence="1">ADP-hep 6-epimerase</shortName>
        <shortName evidence="1">AGME</shortName>
    </alternativeName>
</protein>
<evidence type="ECO:0000255" key="1">
    <source>
        <dbReference type="HAMAP-Rule" id="MF_01601"/>
    </source>
</evidence>
<sequence>MIIVTGGAGMIGSNIVKSLNNKGFNDILVVDNLKDGKKFKNLVDLDITDYMDKEDFITQIMAGDDFGPIEAIFHEGACSATTEWDGKYIMMNNYEYSKELLHFCIEREIPFLYASSAATYGETDTFIEERAYEGALNVYGYSKQQFDNYVRRLWADAEEHNETLSQITGFRYFNVYGPREQHKGSMASVAFHLNNQMNAGDNPKLFEGSDEFKRDFVYVGDVAAVNLWFLENGVSGIYNCGTGRAEPFRAVAEAVIKHHGKGEVETIPFPEHLKGAYQEFTQADLTKLRAAGCDVEFKSVADGVAEYMAMINK</sequence>
<organism>
    <name type="scientific">Aliivibrio fischeri (strain ATCC 700601 / ES114)</name>
    <name type="common">Vibrio fischeri</name>
    <dbReference type="NCBI Taxonomy" id="312309"/>
    <lineage>
        <taxon>Bacteria</taxon>
        <taxon>Pseudomonadati</taxon>
        <taxon>Pseudomonadota</taxon>
        <taxon>Gammaproteobacteria</taxon>
        <taxon>Vibrionales</taxon>
        <taxon>Vibrionaceae</taxon>
        <taxon>Aliivibrio</taxon>
    </lineage>
</organism>
<gene>
    <name evidence="1" type="primary">hldD</name>
    <name type="ordered locus">VF_0152</name>
</gene>